<name>FUD1A_XENLA</name>
<comment type="function">
    <text evidence="1">Acts as an activator of hypoxia-induced mitophagy, an important mechanism for mitochondrial quality control.</text>
</comment>
<comment type="subcellular location">
    <subcellularLocation>
        <location evidence="1">Mitochondrion outer membrane</location>
        <topology evidence="1">Multi-pass membrane protein</topology>
    </subcellularLocation>
</comment>
<comment type="similarity">
    <text evidence="3">Belongs to the FUN14 family.</text>
</comment>
<reference key="1">
    <citation type="submission" date="2005-03" db="EMBL/GenBank/DDBJ databases">
        <authorList>
            <consortium name="NIH - Xenopus Gene Collection (XGC) project"/>
        </authorList>
    </citation>
    <scope>NUCLEOTIDE SEQUENCE [LARGE SCALE MRNA]</scope>
    <source>
        <tissue>Egg</tissue>
    </source>
</reference>
<evidence type="ECO:0000250" key="1"/>
<evidence type="ECO:0000255" key="2"/>
<evidence type="ECO:0000305" key="3"/>
<dbReference type="EMBL" id="BC092015">
    <property type="protein sequence ID" value="AAH92015.1"/>
    <property type="molecule type" value="mRNA"/>
</dbReference>
<dbReference type="RefSeq" id="NP_001089315.1">
    <property type="nucleotide sequence ID" value="NM_001095846.1"/>
</dbReference>
<dbReference type="DNASU" id="734365"/>
<dbReference type="GeneID" id="734365"/>
<dbReference type="KEGG" id="xla:734365"/>
<dbReference type="AGR" id="Xenbase:XB-GENE-964326"/>
<dbReference type="CTD" id="734365"/>
<dbReference type="Xenbase" id="XB-GENE-964326">
    <property type="gene designation" value="fundc1.S"/>
</dbReference>
<dbReference type="OrthoDB" id="163794at2759"/>
<dbReference type="Proteomes" id="UP000186698">
    <property type="component" value="Chromosome 2S"/>
</dbReference>
<dbReference type="Bgee" id="734365">
    <property type="expression patterns" value="Expressed in muscle tissue and 19 other cell types or tissues"/>
</dbReference>
<dbReference type="GO" id="GO:0005741">
    <property type="term" value="C:mitochondrial outer membrane"/>
    <property type="evidence" value="ECO:0000250"/>
    <property type="project" value="UniProtKB"/>
</dbReference>
<dbReference type="GO" id="GO:0000422">
    <property type="term" value="P:autophagy of mitochondrion"/>
    <property type="evidence" value="ECO:0000250"/>
    <property type="project" value="UniProtKB"/>
</dbReference>
<dbReference type="GO" id="GO:0001666">
    <property type="term" value="P:response to hypoxia"/>
    <property type="evidence" value="ECO:0000250"/>
    <property type="project" value="UniProtKB"/>
</dbReference>
<dbReference type="InterPro" id="IPR007014">
    <property type="entry name" value="FUN14"/>
</dbReference>
<dbReference type="PANTHER" id="PTHR21346">
    <property type="entry name" value="FUN14 DOMAIN CONTAINING"/>
    <property type="match status" value="1"/>
</dbReference>
<dbReference type="PANTHER" id="PTHR21346:SF2">
    <property type="entry name" value="FUN14 DOMAIN-CONTAINING PROTEIN 1"/>
    <property type="match status" value="1"/>
</dbReference>
<dbReference type="Pfam" id="PF04930">
    <property type="entry name" value="FUN14"/>
    <property type="match status" value="1"/>
</dbReference>
<proteinExistence type="evidence at transcript level"/>
<keyword id="KW-0072">Autophagy</keyword>
<keyword id="KW-0472">Membrane</keyword>
<keyword id="KW-0496">Mitochondrion</keyword>
<keyword id="KW-1000">Mitochondrion outer membrane</keyword>
<keyword id="KW-1185">Reference proteome</keyword>
<keyword id="KW-0812">Transmembrane</keyword>
<keyword id="KW-1133">Transmembrane helix</keyword>
<sequence length="151" mass="16573">MAARREPSSDDESYEVLDLTDYARRHHWWNRLFGRNSGPLTEKYSVATQIVIGGVSGWCAGFLFQKVGKLAATAVGGGFLLLQIASHGGYIQVDWKRVEKDVNNAKRKIKKEANKSAPEINTLIEESTDFVKKNIVVSGGFVGGFLLGLAS</sequence>
<accession>Q58EA0</accession>
<protein>
    <recommendedName>
        <fullName>FUN14 domain-containing protein 1A</fullName>
    </recommendedName>
</protein>
<feature type="chain" id="PRO_0000271350" description="FUN14 domain-containing protein 1A">
    <location>
        <begin position="1"/>
        <end position="151"/>
    </location>
</feature>
<feature type="transmembrane region" description="Helical" evidence="2">
    <location>
        <begin position="44"/>
        <end position="64"/>
    </location>
</feature>
<feature type="transmembrane region" description="Helical" evidence="2">
    <location>
        <begin position="71"/>
        <end position="91"/>
    </location>
</feature>
<feature type="transmembrane region" description="Helical" evidence="2">
    <location>
        <begin position="130"/>
        <end position="150"/>
    </location>
</feature>
<feature type="short sequence motif" description="YXXL">
    <location>
        <begin position="14"/>
        <end position="17"/>
    </location>
</feature>
<gene>
    <name type="primary">fundc1-a</name>
</gene>
<organism>
    <name type="scientific">Xenopus laevis</name>
    <name type="common">African clawed frog</name>
    <dbReference type="NCBI Taxonomy" id="8355"/>
    <lineage>
        <taxon>Eukaryota</taxon>
        <taxon>Metazoa</taxon>
        <taxon>Chordata</taxon>
        <taxon>Craniata</taxon>
        <taxon>Vertebrata</taxon>
        <taxon>Euteleostomi</taxon>
        <taxon>Amphibia</taxon>
        <taxon>Batrachia</taxon>
        <taxon>Anura</taxon>
        <taxon>Pipoidea</taxon>
        <taxon>Pipidae</taxon>
        <taxon>Xenopodinae</taxon>
        <taxon>Xenopus</taxon>
        <taxon>Xenopus</taxon>
    </lineage>
</organism>